<gene>
    <name evidence="1" type="primary">tdh</name>
    <name type="ordered locus">VC0395_0353</name>
    <name type="ordered locus">VC395_A0910</name>
</gene>
<organism>
    <name type="scientific">Vibrio cholerae serotype O1 (strain ATCC 39541 / Classical Ogawa 395 / O395)</name>
    <dbReference type="NCBI Taxonomy" id="345073"/>
    <lineage>
        <taxon>Bacteria</taxon>
        <taxon>Pseudomonadati</taxon>
        <taxon>Pseudomonadota</taxon>
        <taxon>Gammaproteobacteria</taxon>
        <taxon>Vibrionales</taxon>
        <taxon>Vibrionaceae</taxon>
        <taxon>Vibrio</taxon>
    </lineage>
</organism>
<protein>
    <recommendedName>
        <fullName evidence="1">L-threonine 3-dehydrogenase</fullName>
        <shortName evidence="1">TDH</shortName>
        <ecNumber evidence="1">1.1.1.103</ecNumber>
    </recommendedName>
</protein>
<evidence type="ECO:0000255" key="1">
    <source>
        <dbReference type="HAMAP-Rule" id="MF_00627"/>
    </source>
</evidence>
<name>TDH_VIBC3</name>
<accession>A5F0N6</accession>
<accession>C3M6H9</accession>
<sequence>MKIKALSKLKPEQGIWMNEVDMPELGHNDLLIKIKKTAICGTDVHIYNWDEWSQKTIPVPMVVGHEYVGEVVGIGQEVRGFQIGDRVSGEGHITCGHCRNCRGGRTHLCRNTIGVGVNRTGCFSEYLVIPAFNAFKIPDGISDDLASIFDPFGNAVHTALSFDLVGEDVLITGAGPIGIMAAAVAKHVGARHVVITDVNEYRLDLARKMGVTRAVNVAEQNLEDVMKELGMTEGFDVGLEMSGVPSAFSAMLKTMNHGGRIALLGIPPSSMAIDWNQVIFKGLVIKGIYGREMFETWYKMASLIQSGLDISPIITHHFKVDDFQKGFDIMRSGASGKVILDWQ</sequence>
<proteinExistence type="inferred from homology"/>
<comment type="function">
    <text evidence="1">Catalyzes the NAD(+)-dependent oxidation of L-threonine to 2-amino-3-ketobutyrate.</text>
</comment>
<comment type="catalytic activity">
    <reaction evidence="1">
        <text>L-threonine + NAD(+) = (2S)-2-amino-3-oxobutanoate + NADH + H(+)</text>
        <dbReference type="Rhea" id="RHEA:13161"/>
        <dbReference type="ChEBI" id="CHEBI:15378"/>
        <dbReference type="ChEBI" id="CHEBI:57540"/>
        <dbReference type="ChEBI" id="CHEBI:57926"/>
        <dbReference type="ChEBI" id="CHEBI:57945"/>
        <dbReference type="ChEBI" id="CHEBI:78948"/>
        <dbReference type="EC" id="1.1.1.103"/>
    </reaction>
</comment>
<comment type="cofactor">
    <cofactor evidence="1">
        <name>Zn(2+)</name>
        <dbReference type="ChEBI" id="CHEBI:29105"/>
    </cofactor>
    <text evidence="1">Binds 2 Zn(2+) ions per subunit.</text>
</comment>
<comment type="pathway">
    <text evidence="1">Amino-acid degradation; L-threonine degradation via oxydo-reductase pathway; glycine from L-threonine: step 1/2.</text>
</comment>
<comment type="subunit">
    <text evidence="1">Homotetramer.</text>
</comment>
<comment type="subcellular location">
    <subcellularLocation>
        <location evidence="1">Cytoplasm</location>
    </subcellularLocation>
</comment>
<comment type="similarity">
    <text evidence="1">Belongs to the zinc-containing alcohol dehydrogenase family.</text>
</comment>
<feature type="chain" id="PRO_1000072658" description="L-threonine 3-dehydrogenase">
    <location>
        <begin position="1"/>
        <end position="343"/>
    </location>
</feature>
<feature type="active site" description="Charge relay system" evidence="1">
    <location>
        <position position="42"/>
    </location>
</feature>
<feature type="active site" description="Charge relay system" evidence="1">
    <location>
        <position position="45"/>
    </location>
</feature>
<feature type="binding site" evidence="1">
    <location>
        <position position="40"/>
    </location>
    <ligand>
        <name>Zn(2+)</name>
        <dbReference type="ChEBI" id="CHEBI:29105"/>
        <label>1</label>
        <note>catalytic</note>
    </ligand>
</feature>
<feature type="binding site" evidence="1">
    <location>
        <position position="65"/>
    </location>
    <ligand>
        <name>Zn(2+)</name>
        <dbReference type="ChEBI" id="CHEBI:29105"/>
        <label>1</label>
        <note>catalytic</note>
    </ligand>
</feature>
<feature type="binding site" evidence="1">
    <location>
        <position position="66"/>
    </location>
    <ligand>
        <name>Zn(2+)</name>
        <dbReference type="ChEBI" id="CHEBI:29105"/>
        <label>1</label>
        <note>catalytic</note>
    </ligand>
</feature>
<feature type="binding site" evidence="1">
    <location>
        <position position="95"/>
    </location>
    <ligand>
        <name>Zn(2+)</name>
        <dbReference type="ChEBI" id="CHEBI:29105"/>
        <label>2</label>
    </ligand>
</feature>
<feature type="binding site" evidence="1">
    <location>
        <position position="98"/>
    </location>
    <ligand>
        <name>Zn(2+)</name>
        <dbReference type="ChEBI" id="CHEBI:29105"/>
        <label>2</label>
    </ligand>
</feature>
<feature type="binding site" evidence="1">
    <location>
        <position position="101"/>
    </location>
    <ligand>
        <name>Zn(2+)</name>
        <dbReference type="ChEBI" id="CHEBI:29105"/>
        <label>2</label>
    </ligand>
</feature>
<feature type="binding site" evidence="1">
    <location>
        <position position="109"/>
    </location>
    <ligand>
        <name>Zn(2+)</name>
        <dbReference type="ChEBI" id="CHEBI:29105"/>
        <label>2</label>
    </ligand>
</feature>
<feature type="binding site" evidence="1">
    <location>
        <position position="177"/>
    </location>
    <ligand>
        <name>NAD(+)</name>
        <dbReference type="ChEBI" id="CHEBI:57540"/>
    </ligand>
</feature>
<feature type="binding site" evidence="1">
    <location>
        <position position="197"/>
    </location>
    <ligand>
        <name>NAD(+)</name>
        <dbReference type="ChEBI" id="CHEBI:57540"/>
    </ligand>
</feature>
<feature type="binding site" evidence="1">
    <location>
        <position position="202"/>
    </location>
    <ligand>
        <name>NAD(+)</name>
        <dbReference type="ChEBI" id="CHEBI:57540"/>
    </ligand>
</feature>
<feature type="binding site" evidence="1">
    <location>
        <begin position="264"/>
        <end position="266"/>
    </location>
    <ligand>
        <name>NAD(+)</name>
        <dbReference type="ChEBI" id="CHEBI:57540"/>
    </ligand>
</feature>
<feature type="binding site" evidence="1">
    <location>
        <begin position="288"/>
        <end position="289"/>
    </location>
    <ligand>
        <name>NAD(+)</name>
        <dbReference type="ChEBI" id="CHEBI:57540"/>
    </ligand>
</feature>
<feature type="site" description="Important for catalytic activity for the proton relay mechanism but does not participate directly in the coordination of zinc atom" evidence="1">
    <location>
        <position position="150"/>
    </location>
</feature>
<dbReference type="EC" id="1.1.1.103" evidence="1"/>
<dbReference type="EMBL" id="CP000626">
    <property type="protein sequence ID" value="ABQ19407.1"/>
    <property type="molecule type" value="Genomic_DNA"/>
</dbReference>
<dbReference type="EMBL" id="CP001236">
    <property type="protein sequence ID" value="ACP11742.1"/>
    <property type="molecule type" value="Genomic_DNA"/>
</dbReference>
<dbReference type="RefSeq" id="WP_000692622.1">
    <property type="nucleotide sequence ID" value="NZ_JAACZH010000012.1"/>
</dbReference>
<dbReference type="SMR" id="A5F0N6"/>
<dbReference type="GeneID" id="69721606"/>
<dbReference type="KEGG" id="vco:VC0395_0353"/>
<dbReference type="KEGG" id="vcr:VC395_A0910"/>
<dbReference type="PATRIC" id="fig|345073.21.peg.3638"/>
<dbReference type="eggNOG" id="COG1063">
    <property type="taxonomic scope" value="Bacteria"/>
</dbReference>
<dbReference type="HOGENOM" id="CLU_026673_11_0_6"/>
<dbReference type="OrthoDB" id="9773078at2"/>
<dbReference type="UniPathway" id="UPA00046">
    <property type="reaction ID" value="UER00505"/>
</dbReference>
<dbReference type="Proteomes" id="UP000000249">
    <property type="component" value="Chromosome 1"/>
</dbReference>
<dbReference type="GO" id="GO:0005737">
    <property type="term" value="C:cytoplasm"/>
    <property type="evidence" value="ECO:0007669"/>
    <property type="project" value="UniProtKB-SubCell"/>
</dbReference>
<dbReference type="GO" id="GO:0008743">
    <property type="term" value="F:L-threonine 3-dehydrogenase activity"/>
    <property type="evidence" value="ECO:0007669"/>
    <property type="project" value="UniProtKB-UniRule"/>
</dbReference>
<dbReference type="GO" id="GO:0008270">
    <property type="term" value="F:zinc ion binding"/>
    <property type="evidence" value="ECO:0007669"/>
    <property type="project" value="UniProtKB-UniRule"/>
</dbReference>
<dbReference type="GO" id="GO:0019518">
    <property type="term" value="P:L-threonine catabolic process to glycine"/>
    <property type="evidence" value="ECO:0007669"/>
    <property type="project" value="UniProtKB-UniPathway"/>
</dbReference>
<dbReference type="FunFam" id="3.40.50.720:FF:000059">
    <property type="entry name" value="L-threonine 3-dehydrogenase"/>
    <property type="match status" value="1"/>
</dbReference>
<dbReference type="Gene3D" id="3.90.180.10">
    <property type="entry name" value="Medium-chain alcohol dehydrogenases, catalytic domain"/>
    <property type="match status" value="1"/>
</dbReference>
<dbReference type="Gene3D" id="3.40.50.720">
    <property type="entry name" value="NAD(P)-binding Rossmann-like Domain"/>
    <property type="match status" value="1"/>
</dbReference>
<dbReference type="HAMAP" id="MF_00627">
    <property type="entry name" value="Thr_dehydrog"/>
    <property type="match status" value="1"/>
</dbReference>
<dbReference type="InterPro" id="IPR013149">
    <property type="entry name" value="ADH-like_C"/>
</dbReference>
<dbReference type="InterPro" id="IPR013154">
    <property type="entry name" value="ADH-like_N"/>
</dbReference>
<dbReference type="InterPro" id="IPR002328">
    <property type="entry name" value="ADH_Zn_CS"/>
</dbReference>
<dbReference type="InterPro" id="IPR011032">
    <property type="entry name" value="GroES-like_sf"/>
</dbReference>
<dbReference type="InterPro" id="IPR004627">
    <property type="entry name" value="L-Threonine_3-DHase"/>
</dbReference>
<dbReference type="InterPro" id="IPR036291">
    <property type="entry name" value="NAD(P)-bd_dom_sf"/>
</dbReference>
<dbReference type="InterPro" id="IPR020843">
    <property type="entry name" value="PKS_ER"/>
</dbReference>
<dbReference type="InterPro" id="IPR050129">
    <property type="entry name" value="Zn_alcohol_dh"/>
</dbReference>
<dbReference type="NCBIfam" id="NF003808">
    <property type="entry name" value="PRK05396.1"/>
    <property type="match status" value="1"/>
</dbReference>
<dbReference type="NCBIfam" id="TIGR00692">
    <property type="entry name" value="tdh"/>
    <property type="match status" value="1"/>
</dbReference>
<dbReference type="PANTHER" id="PTHR43401">
    <property type="entry name" value="L-THREONINE 3-DEHYDROGENASE"/>
    <property type="match status" value="1"/>
</dbReference>
<dbReference type="PANTHER" id="PTHR43401:SF2">
    <property type="entry name" value="L-THREONINE 3-DEHYDROGENASE"/>
    <property type="match status" value="1"/>
</dbReference>
<dbReference type="Pfam" id="PF08240">
    <property type="entry name" value="ADH_N"/>
    <property type="match status" value="1"/>
</dbReference>
<dbReference type="Pfam" id="PF00107">
    <property type="entry name" value="ADH_zinc_N"/>
    <property type="match status" value="1"/>
</dbReference>
<dbReference type="SMART" id="SM00829">
    <property type="entry name" value="PKS_ER"/>
    <property type="match status" value="1"/>
</dbReference>
<dbReference type="SUPFAM" id="SSF50129">
    <property type="entry name" value="GroES-like"/>
    <property type="match status" value="1"/>
</dbReference>
<dbReference type="SUPFAM" id="SSF51735">
    <property type="entry name" value="NAD(P)-binding Rossmann-fold domains"/>
    <property type="match status" value="1"/>
</dbReference>
<dbReference type="PROSITE" id="PS00059">
    <property type="entry name" value="ADH_ZINC"/>
    <property type="match status" value="1"/>
</dbReference>
<reference key="1">
    <citation type="submission" date="2007-03" db="EMBL/GenBank/DDBJ databases">
        <authorList>
            <person name="Heidelberg J."/>
        </authorList>
    </citation>
    <scope>NUCLEOTIDE SEQUENCE [LARGE SCALE GENOMIC DNA]</scope>
    <source>
        <strain>ATCC 39541 / Classical Ogawa 395 / O395</strain>
    </source>
</reference>
<reference key="2">
    <citation type="journal article" date="2008" name="PLoS ONE">
        <title>A recalibrated molecular clock and independent origins for the cholera pandemic clones.</title>
        <authorList>
            <person name="Feng L."/>
            <person name="Reeves P.R."/>
            <person name="Lan R."/>
            <person name="Ren Y."/>
            <person name="Gao C."/>
            <person name="Zhou Z."/>
            <person name="Ren Y."/>
            <person name="Cheng J."/>
            <person name="Wang W."/>
            <person name="Wang J."/>
            <person name="Qian W."/>
            <person name="Li D."/>
            <person name="Wang L."/>
        </authorList>
    </citation>
    <scope>NUCLEOTIDE SEQUENCE [LARGE SCALE GENOMIC DNA]</scope>
    <source>
        <strain>ATCC 39541 / Classical Ogawa 395 / O395</strain>
    </source>
</reference>
<keyword id="KW-0963">Cytoplasm</keyword>
<keyword id="KW-0479">Metal-binding</keyword>
<keyword id="KW-0520">NAD</keyword>
<keyword id="KW-0560">Oxidoreductase</keyword>
<keyword id="KW-0862">Zinc</keyword>